<comment type="function">
    <text evidence="1">Catalyzes the condensation of the acetyl group of acetyl-CoA with 3-methyl-2-oxobutanoate (2-ketoisovalerate) to form 3-carboxy-3-hydroxy-4-methylpentanoate (2-isopropylmalate).</text>
</comment>
<comment type="catalytic activity">
    <reaction evidence="1">
        <text>3-methyl-2-oxobutanoate + acetyl-CoA + H2O = (2S)-2-isopropylmalate + CoA + H(+)</text>
        <dbReference type="Rhea" id="RHEA:21524"/>
        <dbReference type="ChEBI" id="CHEBI:1178"/>
        <dbReference type="ChEBI" id="CHEBI:11851"/>
        <dbReference type="ChEBI" id="CHEBI:15377"/>
        <dbReference type="ChEBI" id="CHEBI:15378"/>
        <dbReference type="ChEBI" id="CHEBI:57287"/>
        <dbReference type="ChEBI" id="CHEBI:57288"/>
        <dbReference type="EC" id="2.3.3.13"/>
    </reaction>
</comment>
<comment type="cofactor">
    <cofactor evidence="1">
        <name>Mg(2+)</name>
        <dbReference type="ChEBI" id="CHEBI:18420"/>
    </cofactor>
</comment>
<comment type="pathway">
    <text evidence="1">Amino-acid biosynthesis; L-leucine biosynthesis; L-leucine from 3-methyl-2-oxobutanoate: step 1/4.</text>
</comment>
<comment type="subunit">
    <text evidence="1">Homodimer.</text>
</comment>
<comment type="subcellular location">
    <subcellularLocation>
        <location evidence="1">Cytoplasm</location>
    </subcellularLocation>
</comment>
<comment type="similarity">
    <text evidence="1">Belongs to the alpha-IPM synthase/homocitrate synthase family. LeuA type 2 subfamily.</text>
</comment>
<proteinExistence type="inferred from homology"/>
<evidence type="ECO:0000255" key="1">
    <source>
        <dbReference type="HAMAP-Rule" id="MF_00572"/>
    </source>
</evidence>
<feature type="chain" id="PRO_0000140433" description="2-isopropylmalate synthase">
    <location>
        <begin position="1"/>
        <end position="558"/>
    </location>
</feature>
<feature type="domain" description="Pyruvate carboxyltransferase" evidence="1">
    <location>
        <begin position="30"/>
        <end position="303"/>
    </location>
</feature>
<feature type="region of interest" description="Regulatory domain" evidence="1">
    <location>
        <begin position="438"/>
        <end position="558"/>
    </location>
</feature>
<feature type="binding site" evidence="1">
    <location>
        <position position="39"/>
    </location>
    <ligand>
        <name>Mg(2+)</name>
        <dbReference type="ChEBI" id="CHEBI:18420"/>
    </ligand>
</feature>
<feature type="binding site" evidence="1">
    <location>
        <position position="242"/>
    </location>
    <ligand>
        <name>Mg(2+)</name>
        <dbReference type="ChEBI" id="CHEBI:18420"/>
    </ligand>
</feature>
<feature type="binding site" evidence="1">
    <location>
        <position position="244"/>
    </location>
    <ligand>
        <name>Mg(2+)</name>
        <dbReference type="ChEBI" id="CHEBI:18420"/>
    </ligand>
</feature>
<feature type="binding site" evidence="1">
    <location>
        <position position="278"/>
    </location>
    <ligand>
        <name>Mg(2+)</name>
        <dbReference type="ChEBI" id="CHEBI:18420"/>
    </ligand>
</feature>
<sequence length="558" mass="62975">MSYTKYQRGYFMPPTPSLEWSKKEYIAKAPIWCSVDLRDGNQALITPMSLEEKITFFKLLLKVGFKEIEVGFPAASETEYRFLRTLIEEDLIPDDVSVQVLTQAREHIIKKTFESLEGCKNAIVHVYNSTSYAQREQVFRKSKDEIKHIACEGAICLKESAAATKGNFRFEYSPESFSGTEVDYALEVCNAVIDIFEPTLEKKLIINLPVTVEMSLPHIYASQVEYMSKHLKNRENVLISLHPHNDRGCAIADAELGLLAGADRIEGTLFGNGERTGNVDIITLAMNMHSHGVDPKLDFSNIPSICDVYEKVTKMQVYERQPYSGKLVFAAFSGSHQDAIAKGMAYHKEHNLSTWSVPYLPIDPKDVGRVYESDVIRINSQSGKGGIAYILHHHYGVNLPPLFREEFSYYVKNISDKAHKELSPDEICEIFQNDFVNLNNTLCVQDFHFTHIDSKPSQEFNVKLHILYAKENSKTQQEITGKGNGRLDSIANALREHLNLDFEIIDYSEHSLKKGSTSQAVSYVQIESKGKKCFGVGIDNDIITASIYGLVSALNRII</sequence>
<protein>
    <recommendedName>
        <fullName evidence="1">2-isopropylmalate synthase</fullName>
        <ecNumber evidence="1">2.3.3.13</ecNumber>
    </recommendedName>
    <alternativeName>
        <fullName evidence="1">Alpha-IPM synthase</fullName>
    </alternativeName>
    <alternativeName>
        <fullName evidence="1">Alpha-isopropylmalate synthase</fullName>
    </alternativeName>
</protein>
<dbReference type="EC" id="2.3.3.13" evidence="1"/>
<dbReference type="EMBL" id="AE017125">
    <property type="protein sequence ID" value="AAP77734.1"/>
    <property type="molecule type" value="Genomic_DNA"/>
</dbReference>
<dbReference type="RefSeq" id="WP_011115977.1">
    <property type="nucleotide sequence ID" value="NC_004917.1"/>
</dbReference>
<dbReference type="SMR" id="Q7VH30"/>
<dbReference type="STRING" id="235279.HH_1137"/>
<dbReference type="KEGG" id="hhe:HH_1137"/>
<dbReference type="eggNOG" id="COG0119">
    <property type="taxonomic scope" value="Bacteria"/>
</dbReference>
<dbReference type="HOGENOM" id="CLU_004588_3_2_7"/>
<dbReference type="OrthoDB" id="9803573at2"/>
<dbReference type="UniPathway" id="UPA00048">
    <property type="reaction ID" value="UER00070"/>
</dbReference>
<dbReference type="Proteomes" id="UP000002495">
    <property type="component" value="Chromosome"/>
</dbReference>
<dbReference type="GO" id="GO:0005737">
    <property type="term" value="C:cytoplasm"/>
    <property type="evidence" value="ECO:0007669"/>
    <property type="project" value="UniProtKB-SubCell"/>
</dbReference>
<dbReference type="GO" id="GO:0003852">
    <property type="term" value="F:2-isopropylmalate synthase activity"/>
    <property type="evidence" value="ECO:0007669"/>
    <property type="project" value="UniProtKB-UniRule"/>
</dbReference>
<dbReference type="GO" id="GO:0003985">
    <property type="term" value="F:acetyl-CoA C-acetyltransferase activity"/>
    <property type="evidence" value="ECO:0007669"/>
    <property type="project" value="UniProtKB-UniRule"/>
</dbReference>
<dbReference type="GO" id="GO:0000287">
    <property type="term" value="F:magnesium ion binding"/>
    <property type="evidence" value="ECO:0007669"/>
    <property type="project" value="UniProtKB-UniRule"/>
</dbReference>
<dbReference type="GO" id="GO:0009098">
    <property type="term" value="P:L-leucine biosynthetic process"/>
    <property type="evidence" value="ECO:0007669"/>
    <property type="project" value="UniProtKB-UniRule"/>
</dbReference>
<dbReference type="CDD" id="cd07942">
    <property type="entry name" value="DRE_TIM_LeuA"/>
    <property type="match status" value="1"/>
</dbReference>
<dbReference type="Gene3D" id="3.30.160.270">
    <property type="match status" value="1"/>
</dbReference>
<dbReference type="Gene3D" id="3.20.20.70">
    <property type="entry name" value="Aldolase class I"/>
    <property type="match status" value="1"/>
</dbReference>
<dbReference type="HAMAP" id="MF_00572">
    <property type="entry name" value="LeuA_type2"/>
    <property type="match status" value="1"/>
</dbReference>
<dbReference type="InterPro" id="IPR013709">
    <property type="entry name" value="2-isopropylmalate_synth_dimer"/>
</dbReference>
<dbReference type="InterPro" id="IPR002034">
    <property type="entry name" value="AIPM/Hcit_synth_CS"/>
</dbReference>
<dbReference type="InterPro" id="IPR013785">
    <property type="entry name" value="Aldolase_TIM"/>
</dbReference>
<dbReference type="InterPro" id="IPR005668">
    <property type="entry name" value="IPM_Synthase"/>
</dbReference>
<dbReference type="InterPro" id="IPR054692">
    <property type="entry name" value="LeuA-like_post-cat"/>
</dbReference>
<dbReference type="InterPro" id="IPR036230">
    <property type="entry name" value="LeuA_allosteric_dom_sf"/>
</dbReference>
<dbReference type="InterPro" id="IPR039371">
    <property type="entry name" value="LeuA_N_DRE-TIM"/>
</dbReference>
<dbReference type="InterPro" id="IPR000891">
    <property type="entry name" value="PYR_CT"/>
</dbReference>
<dbReference type="NCBIfam" id="NF002991">
    <property type="entry name" value="PRK03739.1"/>
    <property type="match status" value="1"/>
</dbReference>
<dbReference type="PANTHER" id="PTHR46911">
    <property type="match status" value="1"/>
</dbReference>
<dbReference type="PANTHER" id="PTHR46911:SF1">
    <property type="entry name" value="2-ISOPROPYLMALATE SYNTHASE"/>
    <property type="match status" value="1"/>
</dbReference>
<dbReference type="Pfam" id="PF00682">
    <property type="entry name" value="HMGL-like"/>
    <property type="match status" value="1"/>
</dbReference>
<dbReference type="Pfam" id="PF22615">
    <property type="entry name" value="IPMS_D2"/>
    <property type="match status" value="1"/>
</dbReference>
<dbReference type="Pfam" id="PF08502">
    <property type="entry name" value="LeuA_dimer"/>
    <property type="match status" value="1"/>
</dbReference>
<dbReference type="SMART" id="SM00917">
    <property type="entry name" value="LeuA_dimer"/>
    <property type="match status" value="1"/>
</dbReference>
<dbReference type="SUPFAM" id="SSF110921">
    <property type="entry name" value="2-isopropylmalate synthase LeuA, allosteric (dimerisation) domain"/>
    <property type="match status" value="1"/>
</dbReference>
<dbReference type="SUPFAM" id="SSF51569">
    <property type="entry name" value="Aldolase"/>
    <property type="match status" value="1"/>
</dbReference>
<dbReference type="SUPFAM" id="SSF89000">
    <property type="entry name" value="post-HMGL domain-like"/>
    <property type="match status" value="1"/>
</dbReference>
<dbReference type="PROSITE" id="PS00815">
    <property type="entry name" value="AIPM_HOMOCIT_SYNTH_1"/>
    <property type="match status" value="1"/>
</dbReference>
<dbReference type="PROSITE" id="PS00816">
    <property type="entry name" value="AIPM_HOMOCIT_SYNTH_2"/>
    <property type="match status" value="1"/>
</dbReference>
<dbReference type="PROSITE" id="PS50991">
    <property type="entry name" value="PYR_CT"/>
    <property type="match status" value="1"/>
</dbReference>
<reference key="1">
    <citation type="journal article" date="2003" name="Proc. Natl. Acad. Sci. U.S.A.">
        <title>The complete genome sequence of the carcinogenic bacterium Helicobacter hepaticus.</title>
        <authorList>
            <person name="Suerbaum S."/>
            <person name="Josenhans C."/>
            <person name="Sterzenbach T."/>
            <person name="Drescher B."/>
            <person name="Brandt P."/>
            <person name="Bell M."/>
            <person name="Droege M."/>
            <person name="Fartmann B."/>
            <person name="Fischer H.-P."/>
            <person name="Ge Z."/>
            <person name="Hoerster A."/>
            <person name="Holland R."/>
            <person name="Klein K."/>
            <person name="Koenig J."/>
            <person name="Macko L."/>
            <person name="Mendz G.L."/>
            <person name="Nyakatura G."/>
            <person name="Schauer D.B."/>
            <person name="Shen Z."/>
            <person name="Weber J."/>
            <person name="Frosch M."/>
            <person name="Fox J.G."/>
        </authorList>
    </citation>
    <scope>NUCLEOTIDE SEQUENCE [LARGE SCALE GENOMIC DNA]</scope>
    <source>
        <strain>ATCC 51449 / 3B1</strain>
    </source>
</reference>
<gene>
    <name evidence="1" type="primary">leuA</name>
    <name type="ordered locus">HH_1137</name>
</gene>
<accession>Q7VH30</accession>
<keyword id="KW-0028">Amino-acid biosynthesis</keyword>
<keyword id="KW-0100">Branched-chain amino acid biosynthesis</keyword>
<keyword id="KW-0963">Cytoplasm</keyword>
<keyword id="KW-0432">Leucine biosynthesis</keyword>
<keyword id="KW-0460">Magnesium</keyword>
<keyword id="KW-0479">Metal-binding</keyword>
<keyword id="KW-1185">Reference proteome</keyword>
<keyword id="KW-0808">Transferase</keyword>
<name>LEU1_HELHP</name>
<organism>
    <name type="scientific">Helicobacter hepaticus (strain ATCC 51449 / 3B1)</name>
    <dbReference type="NCBI Taxonomy" id="235279"/>
    <lineage>
        <taxon>Bacteria</taxon>
        <taxon>Pseudomonadati</taxon>
        <taxon>Campylobacterota</taxon>
        <taxon>Epsilonproteobacteria</taxon>
        <taxon>Campylobacterales</taxon>
        <taxon>Helicobacteraceae</taxon>
        <taxon>Helicobacter</taxon>
    </lineage>
</organism>